<evidence type="ECO:0000255" key="1">
    <source>
        <dbReference type="HAMAP-Rule" id="MF_00141"/>
    </source>
</evidence>
<accession>Q4QNL2</accession>
<proteinExistence type="inferred from homology"/>
<sequence length="188" mass="20612">MATYTTSDFKPGLKFMQDGEPCVIVENEFVKPGKGQAFTRTRIRKLISGKVLDVNFKSGTSVEAADVMDLNLTYSYKDDAFWYFMHPETFEQYSADAKAVGDAEKWLLDQADCIVTLWNGAPITVTPPNFVELEIVDTDPGLKGDTAGTGGKPATLSTGAVVKVPLFVQIGEVIRVDTRSGEYVSRVK</sequence>
<comment type="function">
    <text evidence="1">Involved in peptide bond synthesis. Alleviates ribosome stalling that occurs when 3 or more consecutive Pro residues or the sequence PPG is present in a protein, possibly by augmenting the peptidyl transferase activity of the ribosome. Modification of Lys-34 is required for alleviation.</text>
</comment>
<comment type="pathway">
    <text evidence="1">Protein biosynthesis; polypeptide chain elongation.</text>
</comment>
<comment type="subcellular location">
    <subcellularLocation>
        <location evidence="1">Cytoplasm</location>
    </subcellularLocation>
</comment>
<comment type="PTM">
    <text evidence="1">May be beta-lysylated on the epsilon-amino group of Lys-34 by the combined action of EpmA and EpmB, and then hydroxylated on the C5 position of the same residue by EpmC (if this protein is present). Lysylation is critical for the stimulatory effect of EF-P on peptide-bond formation. The lysylation moiety may extend toward the peptidyltransferase center and stabilize the terminal 3-CCA end of the tRNA. Hydroxylation of the C5 position on Lys-34 may allow additional potential stabilizing hydrogen-bond interactions with the P-tRNA.</text>
</comment>
<comment type="similarity">
    <text evidence="1">Belongs to the elongation factor P family.</text>
</comment>
<keyword id="KW-0963">Cytoplasm</keyword>
<keyword id="KW-0251">Elongation factor</keyword>
<keyword id="KW-0379">Hydroxylation</keyword>
<keyword id="KW-0648">Protein biosynthesis</keyword>
<organism>
    <name type="scientific">Haemophilus influenzae (strain 86-028NP)</name>
    <dbReference type="NCBI Taxonomy" id="281310"/>
    <lineage>
        <taxon>Bacteria</taxon>
        <taxon>Pseudomonadati</taxon>
        <taxon>Pseudomonadota</taxon>
        <taxon>Gammaproteobacteria</taxon>
        <taxon>Pasteurellales</taxon>
        <taxon>Pasteurellaceae</taxon>
        <taxon>Haemophilus</taxon>
    </lineage>
</organism>
<reference key="1">
    <citation type="journal article" date="2005" name="J. Bacteriol.">
        <title>Genomic sequence of an otitis media isolate of nontypeable Haemophilus influenzae: comparative study with H. influenzae serotype d, strain KW20.</title>
        <authorList>
            <person name="Harrison A."/>
            <person name="Dyer D.W."/>
            <person name="Gillaspy A."/>
            <person name="Ray W.C."/>
            <person name="Mungur R."/>
            <person name="Carson M.B."/>
            <person name="Zhong H."/>
            <person name="Gipson J."/>
            <person name="Gipson M."/>
            <person name="Johnson L.S."/>
            <person name="Lewis L."/>
            <person name="Bakaletz L.O."/>
            <person name="Munson R.S. Jr."/>
        </authorList>
    </citation>
    <scope>NUCLEOTIDE SEQUENCE [LARGE SCALE GENOMIC DNA]</scope>
    <source>
        <strain>86-028NP</strain>
    </source>
</reference>
<dbReference type="EMBL" id="CP000057">
    <property type="protein sequence ID" value="AAX87385.1"/>
    <property type="molecule type" value="Genomic_DNA"/>
</dbReference>
<dbReference type="RefSeq" id="WP_005544066.1">
    <property type="nucleotide sequence ID" value="NC_007146.2"/>
</dbReference>
<dbReference type="SMR" id="Q4QNL2"/>
<dbReference type="GeneID" id="93219277"/>
<dbReference type="KEGG" id="hit:NTHI0446"/>
<dbReference type="HOGENOM" id="CLU_074944_0_0_6"/>
<dbReference type="UniPathway" id="UPA00345"/>
<dbReference type="Proteomes" id="UP000002525">
    <property type="component" value="Chromosome"/>
</dbReference>
<dbReference type="GO" id="GO:0005737">
    <property type="term" value="C:cytoplasm"/>
    <property type="evidence" value="ECO:0007669"/>
    <property type="project" value="UniProtKB-SubCell"/>
</dbReference>
<dbReference type="GO" id="GO:0003746">
    <property type="term" value="F:translation elongation factor activity"/>
    <property type="evidence" value="ECO:0007669"/>
    <property type="project" value="UniProtKB-UniRule"/>
</dbReference>
<dbReference type="GO" id="GO:0043043">
    <property type="term" value="P:peptide biosynthetic process"/>
    <property type="evidence" value="ECO:0007669"/>
    <property type="project" value="InterPro"/>
</dbReference>
<dbReference type="CDD" id="cd04470">
    <property type="entry name" value="S1_EF-P_repeat_1"/>
    <property type="match status" value="1"/>
</dbReference>
<dbReference type="CDD" id="cd05794">
    <property type="entry name" value="S1_EF-P_repeat_2"/>
    <property type="match status" value="1"/>
</dbReference>
<dbReference type="FunFam" id="2.30.30.30:FF:000003">
    <property type="entry name" value="Elongation factor P"/>
    <property type="match status" value="1"/>
</dbReference>
<dbReference type="FunFam" id="2.40.50.140:FF:000004">
    <property type="entry name" value="Elongation factor P"/>
    <property type="match status" value="1"/>
</dbReference>
<dbReference type="FunFam" id="2.40.50.140:FF:000009">
    <property type="entry name" value="Elongation factor P"/>
    <property type="match status" value="1"/>
</dbReference>
<dbReference type="Gene3D" id="2.30.30.30">
    <property type="match status" value="1"/>
</dbReference>
<dbReference type="Gene3D" id="2.40.50.140">
    <property type="entry name" value="Nucleic acid-binding proteins"/>
    <property type="match status" value="2"/>
</dbReference>
<dbReference type="HAMAP" id="MF_00141">
    <property type="entry name" value="EF_P"/>
    <property type="match status" value="1"/>
</dbReference>
<dbReference type="InterPro" id="IPR015365">
    <property type="entry name" value="Elong-fact-P_C"/>
</dbReference>
<dbReference type="InterPro" id="IPR012340">
    <property type="entry name" value="NA-bd_OB-fold"/>
</dbReference>
<dbReference type="InterPro" id="IPR014722">
    <property type="entry name" value="Rib_uL2_dom2"/>
</dbReference>
<dbReference type="InterPro" id="IPR020599">
    <property type="entry name" value="Transl_elong_fac_P/YeiP"/>
</dbReference>
<dbReference type="InterPro" id="IPR013185">
    <property type="entry name" value="Transl_elong_KOW-like"/>
</dbReference>
<dbReference type="InterPro" id="IPR001059">
    <property type="entry name" value="Transl_elong_P/YeiP_cen"/>
</dbReference>
<dbReference type="InterPro" id="IPR013852">
    <property type="entry name" value="Transl_elong_P/YeiP_CS"/>
</dbReference>
<dbReference type="InterPro" id="IPR011768">
    <property type="entry name" value="Transl_elongation_fac_P"/>
</dbReference>
<dbReference type="InterPro" id="IPR008991">
    <property type="entry name" value="Translation_prot_SH3-like_sf"/>
</dbReference>
<dbReference type="NCBIfam" id="TIGR00038">
    <property type="entry name" value="efp"/>
    <property type="match status" value="1"/>
</dbReference>
<dbReference type="NCBIfam" id="NF001810">
    <property type="entry name" value="PRK00529.1"/>
    <property type="match status" value="1"/>
</dbReference>
<dbReference type="PANTHER" id="PTHR30053">
    <property type="entry name" value="ELONGATION FACTOR P"/>
    <property type="match status" value="1"/>
</dbReference>
<dbReference type="PANTHER" id="PTHR30053:SF12">
    <property type="entry name" value="ELONGATION FACTOR P (EF-P) FAMILY PROTEIN"/>
    <property type="match status" value="1"/>
</dbReference>
<dbReference type="Pfam" id="PF01132">
    <property type="entry name" value="EFP"/>
    <property type="match status" value="1"/>
</dbReference>
<dbReference type="Pfam" id="PF08207">
    <property type="entry name" value="EFP_N"/>
    <property type="match status" value="1"/>
</dbReference>
<dbReference type="Pfam" id="PF09285">
    <property type="entry name" value="Elong-fact-P_C"/>
    <property type="match status" value="1"/>
</dbReference>
<dbReference type="PIRSF" id="PIRSF005901">
    <property type="entry name" value="EF-P"/>
    <property type="match status" value="1"/>
</dbReference>
<dbReference type="SMART" id="SM01185">
    <property type="entry name" value="EFP"/>
    <property type="match status" value="1"/>
</dbReference>
<dbReference type="SMART" id="SM00841">
    <property type="entry name" value="Elong-fact-P_C"/>
    <property type="match status" value="1"/>
</dbReference>
<dbReference type="SUPFAM" id="SSF50249">
    <property type="entry name" value="Nucleic acid-binding proteins"/>
    <property type="match status" value="2"/>
</dbReference>
<dbReference type="SUPFAM" id="SSF50104">
    <property type="entry name" value="Translation proteins SH3-like domain"/>
    <property type="match status" value="1"/>
</dbReference>
<dbReference type="PROSITE" id="PS01275">
    <property type="entry name" value="EFP"/>
    <property type="match status" value="1"/>
</dbReference>
<gene>
    <name evidence="1" type="primary">efp</name>
    <name type="ordered locus">NTHI0446</name>
</gene>
<protein>
    <recommendedName>
        <fullName evidence="1">Elongation factor P</fullName>
        <shortName evidence="1">EF-P</shortName>
    </recommendedName>
</protein>
<feature type="chain" id="PRO_1000010754" description="Elongation factor P">
    <location>
        <begin position="1"/>
        <end position="188"/>
    </location>
</feature>
<feature type="modified residue" description="N6-(3,6-diaminohexanoyl)-5-hydroxylysine" evidence="1">
    <location>
        <position position="34"/>
    </location>
</feature>
<name>EFP_HAEI8</name>